<accession>Q774I1</accession>
<accession>Q76QN8</accession>
<proteinExistence type="inferred from homology"/>
<evidence type="ECO:0000305" key="1"/>
<reference key="1">
    <citation type="journal article" date="1996" name="J. Gen. Virol.">
        <title>The region between the M and S genes of the porcine hemagglutinating encephalomyelitis virus is highly homologous to human coronavirus OC43.</title>
        <authorList>
            <person name="Vieler E."/>
            <person name="Schlapp T."/>
            <person name="Herbst W."/>
        </authorList>
    </citation>
    <scope>NUCLEOTIDE SEQUENCE [GENOMIC RNA]</scope>
</reference>
<reference key="2">
    <citation type="journal article" date="2002" name="J. Gen. Virol.">
        <title>Sequence of the 3'-terminal end (8.1 kb) of the genome of porcine haemagglutinating encephalomyelitis virus: comparison with other haemagglutinating coronaviruses.</title>
        <authorList>
            <person name="Sasseville A.M.-J."/>
            <person name="Boutin M."/>
            <person name="Gelinas A.-M."/>
            <person name="Dea S."/>
        </authorList>
    </citation>
    <scope>NUCLEOTIDE SEQUENCE [GENOMIC RNA]</scope>
</reference>
<keyword id="KW-1185">Reference proteome</keyword>
<name>NS12_CVP67</name>
<organismHost>
    <name type="scientific">Sus scrofa</name>
    <name type="common">Pig</name>
    <dbReference type="NCBI Taxonomy" id="9823"/>
</organismHost>
<sequence length="109" mass="12818">MDIWCPEKKYLRYTNGFNVSELEDVCFKYNYQFPKVGYCRVPNYAWCRNQGSFCATFTLYGKSKHYDKYFGIITGFTAFSNSLEEAVNKLVFLAVDFITWRSQSLNVYG</sequence>
<feature type="chain" id="PRO_0000283955" description="Non-structural protein of 12.7 kDa">
    <location>
        <begin position="1"/>
        <end position="109"/>
    </location>
</feature>
<organism>
    <name type="scientific">Porcine hemagglutinating encephalomyelitis virus (strain 67N)</name>
    <name type="common">HEV-67N</name>
    <dbReference type="NCBI Taxonomy" id="230237"/>
    <lineage>
        <taxon>Viruses</taxon>
        <taxon>Riboviria</taxon>
        <taxon>Orthornavirae</taxon>
        <taxon>Pisuviricota</taxon>
        <taxon>Pisoniviricetes</taxon>
        <taxon>Nidovirales</taxon>
        <taxon>Cornidovirineae</taxon>
        <taxon>Coronaviridae</taxon>
        <taxon>Orthocoronavirinae</taxon>
        <taxon>Betacoronavirus</taxon>
        <taxon>Embecovirus</taxon>
        <taxon>Betacoronavirus 1</taxon>
    </lineage>
</organism>
<comment type="similarity">
    <text evidence="1">Belongs to the coronaviruses ns12.7 protein family.</text>
</comment>
<dbReference type="EMBL" id="X89861">
    <property type="protein sequence ID" value="CAA61957.1"/>
    <property type="molecule type" value="Genomic_RNA"/>
</dbReference>
<dbReference type="EMBL" id="AY078417">
    <property type="protein sequence ID" value="AAL80033.1"/>
    <property type="molecule type" value="Genomic_RNA"/>
</dbReference>
<dbReference type="PIR" id="S58182">
    <property type="entry name" value="S58182"/>
</dbReference>
<dbReference type="SMR" id="Q774I1"/>
<dbReference type="Proteomes" id="UP000007546">
    <property type="component" value="Genome"/>
</dbReference>
<dbReference type="InterPro" id="IPR006841">
    <property type="entry name" value="Corona_NS2"/>
</dbReference>
<dbReference type="Pfam" id="PF04753">
    <property type="entry name" value="Corona_NS12-7"/>
    <property type="match status" value="1"/>
</dbReference>
<protein>
    <recommendedName>
        <fullName>Non-structural protein of 12.7 kDa</fullName>
        <shortName>ns12.7</shortName>
    </recommendedName>
    <alternativeName>
        <fullName>12.7 kDa accessory protein</fullName>
    </alternativeName>
</protein>